<dbReference type="GO" id="GO:0005576">
    <property type="term" value="C:extracellular region"/>
    <property type="evidence" value="ECO:0000305"/>
    <property type="project" value="UniProtKB"/>
</dbReference>
<dbReference type="GO" id="GO:0042742">
    <property type="term" value="P:defense response to bacterium"/>
    <property type="evidence" value="ECO:0000314"/>
    <property type="project" value="UniProtKB"/>
</dbReference>
<dbReference type="InterPro" id="IPR012516">
    <property type="entry name" value="Antimicrobial13"/>
</dbReference>
<dbReference type="Pfam" id="PF08108">
    <property type="entry name" value="Antimicrobial13"/>
    <property type="match status" value="1"/>
</dbReference>
<feature type="peptide" id="PRO_0000044144" description="Halocidin subunit A">
    <location>
        <begin position="1"/>
        <end position="18"/>
    </location>
</feature>
<feature type="modified residue" description="Alanine amide" evidence="1">
    <location>
        <position position="18"/>
    </location>
</feature>
<feature type="disulfide bond" description="Interchain (with C-9 in subunit B)">
    <location>
        <position position="12"/>
    </location>
</feature>
<name>HLOA_HALAU</name>
<accession>P83705</accession>
<proteinExistence type="evidence at protein level"/>
<reference evidence="3" key="1">
    <citation type="journal article" date="2002" name="FEBS Lett.">
        <title>Halocidin: a new antimicrobial peptide from hemocytes of the solitary tunicate, Halocynthia aurantium.</title>
        <authorList>
            <person name="Jang W.S."/>
            <person name="Kim K.N."/>
            <person name="Lee Y.S."/>
            <person name="Nam M.H."/>
            <person name="Lee I.H."/>
        </authorList>
    </citation>
    <scope>PROTEIN SEQUENCE</scope>
    <scope>SYNTHESIS</scope>
    <scope>FUNCTION</scope>
    <scope>SUBUNIT</scope>
    <scope>AMIDATION AT ALA-18</scope>
    <scope>MASS SPECTROMETRY</scope>
    <source>
        <tissue evidence="1">Hemocyte</tissue>
    </source>
</reference>
<comment type="function">
    <text evidence="1 2">Antimicrobial activity against S.aureus and P.aeruginosa, possibly by attacking the bacterial cell membrane.</text>
</comment>
<comment type="subunit">
    <text evidence="1">Heterodimer with subunit B; disulfide-linked.</text>
</comment>
<comment type="subcellular location">
    <subcellularLocation>
        <location>Secreted</location>
    </subcellularLocation>
</comment>
<comment type="mass spectrometry"/>
<protein>
    <recommendedName>
        <fullName>Halocidin subunit A</fullName>
    </recommendedName>
</protein>
<evidence type="ECO:0000269" key="1">
    <source>
    </source>
</evidence>
<evidence type="ECO:0000303" key="2">
    <source>
    </source>
</evidence>
<evidence type="ECO:0000305" key="3"/>
<keyword id="KW-0027">Amidation</keyword>
<keyword id="KW-0044">Antibiotic</keyword>
<keyword id="KW-0929">Antimicrobial</keyword>
<keyword id="KW-0903">Direct protein sequencing</keyword>
<keyword id="KW-1015">Disulfide bond</keyword>
<keyword id="KW-0964">Secreted</keyword>
<organism evidence="3">
    <name type="scientific">Halocynthia aurantium</name>
    <name type="common">Sea peach</name>
    <dbReference type="NCBI Taxonomy" id="254849"/>
    <lineage>
        <taxon>Eukaryota</taxon>
        <taxon>Metazoa</taxon>
        <taxon>Chordata</taxon>
        <taxon>Tunicata</taxon>
        <taxon>Ascidiacea</taxon>
        <taxon>Stolidobranchia</taxon>
        <taxon>Pyuridae</taxon>
        <taxon>Halocynthia</taxon>
    </lineage>
</organism>
<sequence>WLNALLHHGLNCAKGVLA</sequence>